<sequence>MADKELKFLVVDDFSTMRRIVRNLLKELGFNNVEEAEDGVDALNKLQAGGFGFIISDWNMPNMDGLELLKTIRADSAMSALPVLMVTAEAKKENIIAAAQAGASGYVVKPFTAATLEEKLNKIFEKLGM</sequence>
<feature type="initiator methionine" description="Removed" evidence="1">
    <location>
        <position position="1"/>
    </location>
</feature>
<feature type="chain" id="PRO_0000081044" description="Chemotaxis protein CheY">
    <location>
        <begin position="2"/>
        <end position="129"/>
    </location>
</feature>
<feature type="domain" description="Response regulatory" evidence="4">
    <location>
        <begin position="7"/>
        <end position="124"/>
    </location>
</feature>
<feature type="binding site" evidence="2">
    <location>
        <position position="12"/>
    </location>
    <ligand>
        <name>Mg(2+)</name>
        <dbReference type="ChEBI" id="CHEBI:18420"/>
    </ligand>
</feature>
<feature type="binding site" evidence="3">
    <location>
        <position position="13"/>
    </location>
    <ligand>
        <name>Mg(2+)</name>
        <dbReference type="ChEBI" id="CHEBI:18420"/>
    </ligand>
</feature>
<feature type="binding site" evidence="3">
    <location>
        <position position="57"/>
    </location>
    <ligand>
        <name>Mg(2+)</name>
        <dbReference type="ChEBI" id="CHEBI:18420"/>
    </ligand>
</feature>
<feature type="binding site" evidence="3">
    <location>
        <position position="59"/>
    </location>
    <ligand>
        <name>Mg(2+)</name>
        <dbReference type="ChEBI" id="CHEBI:18420"/>
    </ligand>
</feature>
<feature type="modified residue" description="4-aspartylphosphate" evidence="4">
    <location>
        <position position="57"/>
    </location>
</feature>
<feature type="modified residue" description="N6-acetyllysine" evidence="1">
    <location>
        <position position="92"/>
    </location>
</feature>
<feature type="modified residue" description="N6-acetyllysine" evidence="1">
    <location>
        <position position="109"/>
    </location>
</feature>
<dbReference type="EMBL" id="AL513382">
    <property type="protein sequence ID" value="CAD05667.1"/>
    <property type="molecule type" value="Genomic_DNA"/>
</dbReference>
<dbReference type="EMBL" id="AE014613">
    <property type="protein sequence ID" value="AAO68634.1"/>
    <property type="molecule type" value="Genomic_DNA"/>
</dbReference>
<dbReference type="RefSeq" id="NP_456482.1">
    <property type="nucleotide sequence ID" value="NC_003198.1"/>
</dbReference>
<dbReference type="RefSeq" id="WP_000763861.1">
    <property type="nucleotide sequence ID" value="NZ_WSUR01000004.1"/>
</dbReference>
<dbReference type="BMRB" id="P0A2D6"/>
<dbReference type="SMR" id="P0A2D6"/>
<dbReference type="STRING" id="220341.gene:17586032"/>
<dbReference type="GeneID" id="66756437"/>
<dbReference type="KEGG" id="stt:t0961"/>
<dbReference type="KEGG" id="sty:STY2125"/>
<dbReference type="PATRIC" id="fig|220341.7.peg.2136"/>
<dbReference type="eggNOG" id="COG0745">
    <property type="taxonomic scope" value="Bacteria"/>
</dbReference>
<dbReference type="HOGENOM" id="CLU_000445_69_12_6"/>
<dbReference type="OMA" id="AAGAHEY"/>
<dbReference type="OrthoDB" id="9800897at2"/>
<dbReference type="Proteomes" id="UP000000541">
    <property type="component" value="Chromosome"/>
</dbReference>
<dbReference type="Proteomes" id="UP000002670">
    <property type="component" value="Chromosome"/>
</dbReference>
<dbReference type="GO" id="GO:0005737">
    <property type="term" value="C:cytoplasm"/>
    <property type="evidence" value="ECO:0007669"/>
    <property type="project" value="UniProtKB-SubCell"/>
</dbReference>
<dbReference type="GO" id="GO:0046872">
    <property type="term" value="F:metal ion binding"/>
    <property type="evidence" value="ECO:0007669"/>
    <property type="project" value="UniProtKB-KW"/>
</dbReference>
<dbReference type="GO" id="GO:0097588">
    <property type="term" value="P:archaeal or bacterial-type flagellum-dependent cell motility"/>
    <property type="evidence" value="ECO:0007669"/>
    <property type="project" value="UniProtKB-KW"/>
</dbReference>
<dbReference type="GO" id="GO:0006935">
    <property type="term" value="P:chemotaxis"/>
    <property type="evidence" value="ECO:0007669"/>
    <property type="project" value="UniProtKB-KW"/>
</dbReference>
<dbReference type="GO" id="GO:0000160">
    <property type="term" value="P:phosphorelay signal transduction system"/>
    <property type="evidence" value="ECO:0007669"/>
    <property type="project" value="UniProtKB-KW"/>
</dbReference>
<dbReference type="CDD" id="cd19923">
    <property type="entry name" value="REC_CheY_CheY3"/>
    <property type="match status" value="1"/>
</dbReference>
<dbReference type="FunFam" id="3.40.50.2300:FF:000019">
    <property type="entry name" value="Chemotaxis response regulator CheY"/>
    <property type="match status" value="1"/>
</dbReference>
<dbReference type="Gene3D" id="3.40.50.2300">
    <property type="match status" value="1"/>
</dbReference>
<dbReference type="InterPro" id="IPR011006">
    <property type="entry name" value="CheY-like_superfamily"/>
</dbReference>
<dbReference type="InterPro" id="IPR001789">
    <property type="entry name" value="Sig_transdc_resp-reg_receiver"/>
</dbReference>
<dbReference type="InterPro" id="IPR052048">
    <property type="entry name" value="ST_Response_Regulator"/>
</dbReference>
<dbReference type="NCBIfam" id="NF007901">
    <property type="entry name" value="PRK10610.1"/>
    <property type="match status" value="1"/>
</dbReference>
<dbReference type="PANTHER" id="PTHR43228">
    <property type="entry name" value="TWO-COMPONENT RESPONSE REGULATOR"/>
    <property type="match status" value="1"/>
</dbReference>
<dbReference type="PANTHER" id="PTHR43228:SF1">
    <property type="entry name" value="TWO-COMPONENT RESPONSE REGULATOR ARR22"/>
    <property type="match status" value="1"/>
</dbReference>
<dbReference type="Pfam" id="PF00072">
    <property type="entry name" value="Response_reg"/>
    <property type="match status" value="1"/>
</dbReference>
<dbReference type="SMART" id="SM00448">
    <property type="entry name" value="REC"/>
    <property type="match status" value="1"/>
</dbReference>
<dbReference type="SUPFAM" id="SSF52172">
    <property type="entry name" value="CheY-like"/>
    <property type="match status" value="1"/>
</dbReference>
<dbReference type="PROSITE" id="PS50110">
    <property type="entry name" value="RESPONSE_REGULATORY"/>
    <property type="match status" value="1"/>
</dbReference>
<evidence type="ECO:0000250" key="1"/>
<evidence type="ECO:0000250" key="2">
    <source>
        <dbReference type="UniProtKB" id="A0A0H3AMJ9"/>
    </source>
</evidence>
<evidence type="ECO:0000250" key="3">
    <source>
        <dbReference type="UniProtKB" id="P0AE67"/>
    </source>
</evidence>
<evidence type="ECO:0000255" key="4">
    <source>
        <dbReference type="PROSITE-ProRule" id="PRU00169"/>
    </source>
</evidence>
<evidence type="ECO:0000305" key="5"/>
<proteinExistence type="inferred from homology"/>
<keyword id="KW-0007">Acetylation</keyword>
<keyword id="KW-0145">Chemotaxis</keyword>
<keyword id="KW-0963">Cytoplasm</keyword>
<keyword id="KW-0283">Flagellar rotation</keyword>
<keyword id="KW-0460">Magnesium</keyword>
<keyword id="KW-0479">Metal-binding</keyword>
<keyword id="KW-0597">Phosphoprotein</keyword>
<keyword id="KW-0902">Two-component regulatory system</keyword>
<protein>
    <recommendedName>
        <fullName>Chemotaxis protein CheY</fullName>
    </recommendedName>
</protein>
<comment type="function">
    <text evidence="3">Involved in the transmission of sensory signals from the chemoreceptors to the flagellar motors. In its active (phosphorylated or acetylated) form, CheY exhibits enhanced binding to a switch component, FliM, at the flagellar motor which induces a change from counterclockwise to clockwise flagellar rotation (By similarity).</text>
</comment>
<comment type="cofactor">
    <cofactor evidence="3">
        <name>Mg(2+)</name>
        <dbReference type="ChEBI" id="CHEBI:18420"/>
    </cofactor>
    <text evidence="3">Binds 1 Mg(2+) ion per subunit.</text>
</comment>
<comment type="subcellular location">
    <subcellularLocation>
        <location evidence="5">Cytoplasm</location>
    </subcellularLocation>
</comment>
<comment type="PTM">
    <text evidence="3">Phosphorylated by CheA or acetylated by acetyl-CoA synthetase, depending on which acetate metabolism pathway is available.</text>
</comment>
<gene>
    <name type="primary">cheY</name>
    <name type="ordered locus">STY2125</name>
    <name type="ordered locus">t0961</name>
</gene>
<organism>
    <name type="scientific">Salmonella typhi</name>
    <dbReference type="NCBI Taxonomy" id="90370"/>
    <lineage>
        <taxon>Bacteria</taxon>
        <taxon>Pseudomonadati</taxon>
        <taxon>Pseudomonadota</taxon>
        <taxon>Gammaproteobacteria</taxon>
        <taxon>Enterobacterales</taxon>
        <taxon>Enterobacteriaceae</taxon>
        <taxon>Salmonella</taxon>
    </lineage>
</organism>
<reference key="1">
    <citation type="journal article" date="2001" name="Nature">
        <title>Complete genome sequence of a multiple drug resistant Salmonella enterica serovar Typhi CT18.</title>
        <authorList>
            <person name="Parkhill J."/>
            <person name="Dougan G."/>
            <person name="James K.D."/>
            <person name="Thomson N.R."/>
            <person name="Pickard D."/>
            <person name="Wain J."/>
            <person name="Churcher C.M."/>
            <person name="Mungall K.L."/>
            <person name="Bentley S.D."/>
            <person name="Holden M.T.G."/>
            <person name="Sebaihia M."/>
            <person name="Baker S."/>
            <person name="Basham D."/>
            <person name="Brooks K."/>
            <person name="Chillingworth T."/>
            <person name="Connerton P."/>
            <person name="Cronin A."/>
            <person name="Davis P."/>
            <person name="Davies R.M."/>
            <person name="Dowd L."/>
            <person name="White N."/>
            <person name="Farrar J."/>
            <person name="Feltwell T."/>
            <person name="Hamlin N."/>
            <person name="Haque A."/>
            <person name="Hien T.T."/>
            <person name="Holroyd S."/>
            <person name="Jagels K."/>
            <person name="Krogh A."/>
            <person name="Larsen T.S."/>
            <person name="Leather S."/>
            <person name="Moule S."/>
            <person name="O'Gaora P."/>
            <person name="Parry C."/>
            <person name="Quail M.A."/>
            <person name="Rutherford K.M."/>
            <person name="Simmonds M."/>
            <person name="Skelton J."/>
            <person name="Stevens K."/>
            <person name="Whitehead S."/>
            <person name="Barrell B.G."/>
        </authorList>
    </citation>
    <scope>NUCLEOTIDE SEQUENCE [LARGE SCALE GENOMIC DNA]</scope>
    <source>
        <strain>CT18</strain>
    </source>
</reference>
<reference key="2">
    <citation type="journal article" date="2003" name="J. Bacteriol.">
        <title>Comparative genomics of Salmonella enterica serovar Typhi strains Ty2 and CT18.</title>
        <authorList>
            <person name="Deng W."/>
            <person name="Liou S.-R."/>
            <person name="Plunkett G. III"/>
            <person name="Mayhew G.F."/>
            <person name="Rose D.J."/>
            <person name="Burland V."/>
            <person name="Kodoyianni V."/>
            <person name="Schwartz D.C."/>
            <person name="Blattner F.R."/>
        </authorList>
    </citation>
    <scope>NUCLEOTIDE SEQUENCE [LARGE SCALE GENOMIC DNA]</scope>
    <source>
        <strain>ATCC 700931 / Ty2</strain>
    </source>
</reference>
<name>CHEY_SALTI</name>
<accession>P0A2D6</accession>
<accession>P06657</accession>